<gene>
    <name evidence="1" type="primary">tusC</name>
    <name type="ordered locus">SBO_3324</name>
</gene>
<evidence type="ECO:0000255" key="1">
    <source>
        <dbReference type="HAMAP-Rule" id="MF_00389"/>
    </source>
</evidence>
<name>TUSC_SHIBS</name>
<reference key="1">
    <citation type="journal article" date="2005" name="Nucleic Acids Res.">
        <title>Genome dynamics and diversity of Shigella species, the etiologic agents of bacillary dysentery.</title>
        <authorList>
            <person name="Yang F."/>
            <person name="Yang J."/>
            <person name="Zhang X."/>
            <person name="Chen L."/>
            <person name="Jiang Y."/>
            <person name="Yan Y."/>
            <person name="Tang X."/>
            <person name="Wang J."/>
            <person name="Xiong Z."/>
            <person name="Dong J."/>
            <person name="Xue Y."/>
            <person name="Zhu Y."/>
            <person name="Xu X."/>
            <person name="Sun L."/>
            <person name="Chen S."/>
            <person name="Nie H."/>
            <person name="Peng J."/>
            <person name="Xu J."/>
            <person name="Wang Y."/>
            <person name="Yuan Z."/>
            <person name="Wen Y."/>
            <person name="Yao Z."/>
            <person name="Shen Y."/>
            <person name="Qiang B."/>
            <person name="Hou Y."/>
            <person name="Yu J."/>
            <person name="Jin Q."/>
        </authorList>
    </citation>
    <scope>NUCLEOTIDE SEQUENCE [LARGE SCALE GENOMIC DNA]</scope>
    <source>
        <strain>Sb227</strain>
    </source>
</reference>
<dbReference type="EMBL" id="CP000036">
    <property type="protein sequence ID" value="ABB67812.1"/>
    <property type="molecule type" value="Genomic_DNA"/>
</dbReference>
<dbReference type="RefSeq" id="WP_000820720.1">
    <property type="nucleotide sequence ID" value="NC_007613.1"/>
</dbReference>
<dbReference type="SMR" id="Q31VU6"/>
<dbReference type="GeneID" id="75206287"/>
<dbReference type="KEGG" id="sbo:SBO_3324"/>
<dbReference type="HOGENOM" id="CLU_155943_1_0_6"/>
<dbReference type="Proteomes" id="UP000007067">
    <property type="component" value="Chromosome"/>
</dbReference>
<dbReference type="GO" id="GO:0005737">
    <property type="term" value="C:cytoplasm"/>
    <property type="evidence" value="ECO:0007669"/>
    <property type="project" value="UniProtKB-SubCell"/>
</dbReference>
<dbReference type="GO" id="GO:0008033">
    <property type="term" value="P:tRNA processing"/>
    <property type="evidence" value="ECO:0007669"/>
    <property type="project" value="UniProtKB-UniRule"/>
</dbReference>
<dbReference type="FunFam" id="3.40.1260.10:FF:000004">
    <property type="entry name" value="Sulfurtransferase TusC"/>
    <property type="match status" value="1"/>
</dbReference>
<dbReference type="Gene3D" id="3.40.1260.10">
    <property type="entry name" value="DsrEFH-like"/>
    <property type="match status" value="1"/>
</dbReference>
<dbReference type="HAMAP" id="MF_00389">
    <property type="entry name" value="Thiourid_synth_C"/>
    <property type="match status" value="1"/>
</dbReference>
<dbReference type="InterPro" id="IPR027396">
    <property type="entry name" value="DsrEFH-like"/>
</dbReference>
<dbReference type="InterPro" id="IPR003787">
    <property type="entry name" value="Sulphur_relay_DsrE/F-like"/>
</dbReference>
<dbReference type="InterPro" id="IPR037450">
    <property type="entry name" value="Sulphur_relay_TusC"/>
</dbReference>
<dbReference type="InterPro" id="IPR017462">
    <property type="entry name" value="Sulphur_relay_TusC/DsrF"/>
</dbReference>
<dbReference type="NCBIfam" id="NF001238">
    <property type="entry name" value="PRK00211.1"/>
    <property type="match status" value="1"/>
</dbReference>
<dbReference type="NCBIfam" id="TIGR03010">
    <property type="entry name" value="sulf_tusC_dsrF"/>
    <property type="match status" value="1"/>
</dbReference>
<dbReference type="PANTHER" id="PTHR38780">
    <property type="entry name" value="PROTEIN TUSC"/>
    <property type="match status" value="1"/>
</dbReference>
<dbReference type="PANTHER" id="PTHR38780:SF1">
    <property type="entry name" value="PROTEIN TUSC"/>
    <property type="match status" value="1"/>
</dbReference>
<dbReference type="Pfam" id="PF02635">
    <property type="entry name" value="DsrE"/>
    <property type="match status" value="1"/>
</dbReference>
<dbReference type="SUPFAM" id="SSF75169">
    <property type="entry name" value="DsrEFH-like"/>
    <property type="match status" value="1"/>
</dbReference>
<comment type="function">
    <text evidence="1">Part of a sulfur-relay system required for 2-thiolation of 5-methylaminomethyl-2-thiouridine (mnm(5)s(2)U) at tRNA wobble positions.</text>
</comment>
<comment type="subunit">
    <text evidence="1">Heterohexamer, formed by a dimer of trimers. The hexameric TusBCD complex contains 2 copies each of TusB, TusC and TusD. The TusBCD complex interacts with TusE.</text>
</comment>
<comment type="subcellular location">
    <subcellularLocation>
        <location evidence="1">Cytoplasm</location>
    </subcellularLocation>
</comment>
<comment type="similarity">
    <text evidence="1">Belongs to the DsrF/TusC family.</text>
</comment>
<organism>
    <name type="scientific">Shigella boydii serotype 4 (strain Sb227)</name>
    <dbReference type="NCBI Taxonomy" id="300268"/>
    <lineage>
        <taxon>Bacteria</taxon>
        <taxon>Pseudomonadati</taxon>
        <taxon>Pseudomonadota</taxon>
        <taxon>Gammaproteobacteria</taxon>
        <taxon>Enterobacterales</taxon>
        <taxon>Enterobacteriaceae</taxon>
        <taxon>Shigella</taxon>
    </lineage>
</organism>
<proteinExistence type="inferred from homology"/>
<sequence length="119" mass="13035">MKRIAFVFSTAPHGTAAGREGLDALLATSALTDDLAVFFIADGVFQLLSGQKPDAVLARDYIATFKLLGLYDIEQCWVCAASLRERGLDPQTPFVVEATPLEADALRRELANYDVILRF</sequence>
<keyword id="KW-0963">Cytoplasm</keyword>
<keyword id="KW-0819">tRNA processing</keyword>
<accession>Q31VU6</accession>
<protein>
    <recommendedName>
        <fullName evidence="1">Protein TusC</fullName>
    </recommendedName>
    <alternativeName>
        <fullName evidence="1">tRNA 2-thiouridine synthesizing protein C</fullName>
    </alternativeName>
</protein>
<feature type="chain" id="PRO_0000234456" description="Protein TusC">
    <location>
        <begin position="1"/>
        <end position="119"/>
    </location>
</feature>